<proteinExistence type="inferred from homology"/>
<feature type="chain" id="PRO_0000095622" description="RNA-binding protein Hfq">
    <location>
        <begin position="1"/>
        <end position="79"/>
    </location>
</feature>
<feature type="domain" description="Sm" evidence="2">
    <location>
        <begin position="10"/>
        <end position="70"/>
    </location>
</feature>
<name>HFQ_BARHE</name>
<keyword id="KW-0694">RNA-binding</keyword>
<keyword id="KW-0346">Stress response</keyword>
<evidence type="ECO:0000255" key="1">
    <source>
        <dbReference type="HAMAP-Rule" id="MF_00436"/>
    </source>
</evidence>
<evidence type="ECO:0000255" key="2">
    <source>
        <dbReference type="PROSITE-ProRule" id="PRU01346"/>
    </source>
</evidence>
<sequence length="79" mass="8948">MVERSQHLQDVFLNTVRKQKISLTIFLVNGVKLTGIVTSFDNFCVLLRRDGHAQLVYKHAISTIMPGQPVQMFEGESSE</sequence>
<protein>
    <recommendedName>
        <fullName evidence="1">RNA-binding protein Hfq</fullName>
    </recommendedName>
</protein>
<comment type="function">
    <text evidence="1">RNA chaperone that binds small regulatory RNA (sRNAs) and mRNAs to facilitate mRNA translational regulation in response to envelope stress, environmental stress and changes in metabolite concentrations. Also binds with high specificity to tRNAs.</text>
</comment>
<comment type="subunit">
    <text evidence="1">Homohexamer.</text>
</comment>
<comment type="similarity">
    <text evidence="1">Belongs to the Hfq family.</text>
</comment>
<dbReference type="EMBL" id="BX897699">
    <property type="protein sequence ID" value="CAF27550.1"/>
    <property type="molecule type" value="Genomic_DNA"/>
</dbReference>
<dbReference type="RefSeq" id="WP_011180651.1">
    <property type="nucleotide sequence ID" value="NZ_LRIJ02000001.1"/>
</dbReference>
<dbReference type="SMR" id="Q6G3L8"/>
<dbReference type="PaxDb" id="283166-BH07490"/>
<dbReference type="EnsemblBacteria" id="CAF27550">
    <property type="protein sequence ID" value="CAF27550"/>
    <property type="gene ID" value="BH07490"/>
</dbReference>
<dbReference type="GeneID" id="92985580"/>
<dbReference type="KEGG" id="bhe:BH07490"/>
<dbReference type="eggNOG" id="COG1923">
    <property type="taxonomic scope" value="Bacteria"/>
</dbReference>
<dbReference type="OrthoDB" id="9799751at2"/>
<dbReference type="Proteomes" id="UP000000421">
    <property type="component" value="Chromosome"/>
</dbReference>
<dbReference type="GO" id="GO:0005829">
    <property type="term" value="C:cytosol"/>
    <property type="evidence" value="ECO:0007669"/>
    <property type="project" value="TreeGrafter"/>
</dbReference>
<dbReference type="GO" id="GO:0003723">
    <property type="term" value="F:RNA binding"/>
    <property type="evidence" value="ECO:0007669"/>
    <property type="project" value="UniProtKB-UniRule"/>
</dbReference>
<dbReference type="GO" id="GO:0006355">
    <property type="term" value="P:regulation of DNA-templated transcription"/>
    <property type="evidence" value="ECO:0007669"/>
    <property type="project" value="InterPro"/>
</dbReference>
<dbReference type="GO" id="GO:0043487">
    <property type="term" value="P:regulation of RNA stability"/>
    <property type="evidence" value="ECO:0007669"/>
    <property type="project" value="TreeGrafter"/>
</dbReference>
<dbReference type="GO" id="GO:0045974">
    <property type="term" value="P:regulation of translation, ncRNA-mediated"/>
    <property type="evidence" value="ECO:0007669"/>
    <property type="project" value="TreeGrafter"/>
</dbReference>
<dbReference type="CDD" id="cd01716">
    <property type="entry name" value="Hfq"/>
    <property type="match status" value="1"/>
</dbReference>
<dbReference type="Gene3D" id="2.30.30.100">
    <property type="match status" value="1"/>
</dbReference>
<dbReference type="HAMAP" id="MF_00436">
    <property type="entry name" value="Hfq"/>
    <property type="match status" value="1"/>
</dbReference>
<dbReference type="InterPro" id="IPR005001">
    <property type="entry name" value="Hfq"/>
</dbReference>
<dbReference type="InterPro" id="IPR010920">
    <property type="entry name" value="LSM_dom_sf"/>
</dbReference>
<dbReference type="InterPro" id="IPR047575">
    <property type="entry name" value="Sm"/>
</dbReference>
<dbReference type="NCBIfam" id="TIGR02383">
    <property type="entry name" value="Hfq"/>
    <property type="match status" value="1"/>
</dbReference>
<dbReference type="NCBIfam" id="NF001602">
    <property type="entry name" value="PRK00395.1"/>
    <property type="match status" value="1"/>
</dbReference>
<dbReference type="PANTHER" id="PTHR34772">
    <property type="entry name" value="RNA-BINDING PROTEIN HFQ"/>
    <property type="match status" value="1"/>
</dbReference>
<dbReference type="PANTHER" id="PTHR34772:SF1">
    <property type="entry name" value="RNA-BINDING PROTEIN HFQ"/>
    <property type="match status" value="1"/>
</dbReference>
<dbReference type="Pfam" id="PF17209">
    <property type="entry name" value="Hfq"/>
    <property type="match status" value="1"/>
</dbReference>
<dbReference type="SUPFAM" id="SSF50182">
    <property type="entry name" value="Sm-like ribonucleoproteins"/>
    <property type="match status" value="1"/>
</dbReference>
<dbReference type="PROSITE" id="PS52002">
    <property type="entry name" value="SM"/>
    <property type="match status" value="1"/>
</dbReference>
<organism>
    <name type="scientific">Bartonella henselae (strain ATCC 49882 / DSM 28221 / CCUG 30454 / Houston 1)</name>
    <name type="common">Rochalimaea henselae</name>
    <dbReference type="NCBI Taxonomy" id="283166"/>
    <lineage>
        <taxon>Bacteria</taxon>
        <taxon>Pseudomonadati</taxon>
        <taxon>Pseudomonadota</taxon>
        <taxon>Alphaproteobacteria</taxon>
        <taxon>Hyphomicrobiales</taxon>
        <taxon>Bartonellaceae</taxon>
        <taxon>Bartonella</taxon>
    </lineage>
</organism>
<gene>
    <name evidence="1" type="primary">hfq</name>
    <name type="ordered locus">BH07490</name>
</gene>
<accession>Q6G3L8</accession>
<reference key="1">
    <citation type="journal article" date="2004" name="Proc. Natl. Acad. Sci. U.S.A.">
        <title>The louse-borne human pathogen Bartonella quintana is a genomic derivative of the zoonotic agent Bartonella henselae.</title>
        <authorList>
            <person name="Alsmark U.C.M."/>
            <person name="Frank A.C."/>
            <person name="Karlberg E.O."/>
            <person name="Legault B.-A."/>
            <person name="Ardell D.H."/>
            <person name="Canbaeck B."/>
            <person name="Eriksson A.-S."/>
            <person name="Naeslund A.K."/>
            <person name="Handley S.A."/>
            <person name="Huvet M."/>
            <person name="La Scola B."/>
            <person name="Holmberg M."/>
            <person name="Andersson S.G.E."/>
        </authorList>
    </citation>
    <scope>NUCLEOTIDE SEQUENCE [LARGE SCALE GENOMIC DNA]</scope>
    <source>
        <strain>ATCC 49882 / DSM 28221 / CCUG 30454 / Houston 1</strain>
    </source>
</reference>